<feature type="chain" id="PRO_1000002634" description="UDP-N-acetylglucosamine--N-acetylmuramyl-(pentapeptide) pyrophosphoryl-undecaprenol N-acetylglucosamine transferase">
    <location>
        <begin position="1"/>
        <end position="354"/>
    </location>
</feature>
<feature type="binding site" evidence="1">
    <location>
        <begin position="11"/>
        <end position="13"/>
    </location>
    <ligand>
        <name>UDP-N-acetyl-alpha-D-glucosamine</name>
        <dbReference type="ChEBI" id="CHEBI:57705"/>
    </ligand>
</feature>
<feature type="binding site" evidence="1">
    <location>
        <position position="164"/>
    </location>
    <ligand>
        <name>UDP-N-acetyl-alpha-D-glucosamine</name>
        <dbReference type="ChEBI" id="CHEBI:57705"/>
    </ligand>
</feature>
<feature type="binding site" evidence="1">
    <location>
        <position position="194"/>
    </location>
    <ligand>
        <name>UDP-N-acetyl-alpha-D-glucosamine</name>
        <dbReference type="ChEBI" id="CHEBI:57705"/>
    </ligand>
</feature>
<feature type="binding site" evidence="1">
    <location>
        <position position="289"/>
    </location>
    <ligand>
        <name>UDP-N-acetyl-alpha-D-glucosamine</name>
        <dbReference type="ChEBI" id="CHEBI:57705"/>
    </ligand>
</feature>
<protein>
    <recommendedName>
        <fullName evidence="1">UDP-N-acetylglucosamine--N-acetylmuramyl-(pentapeptide) pyrophosphoryl-undecaprenol N-acetylglucosamine transferase</fullName>
        <ecNumber evidence="1">2.4.1.227</ecNumber>
    </recommendedName>
    <alternativeName>
        <fullName evidence="1">Undecaprenyl-PP-MurNAc-pentapeptide-UDPGlcNAc GlcNAc transferase</fullName>
    </alternativeName>
</protein>
<keyword id="KW-0131">Cell cycle</keyword>
<keyword id="KW-0132">Cell division</keyword>
<keyword id="KW-1003">Cell membrane</keyword>
<keyword id="KW-0133">Cell shape</keyword>
<keyword id="KW-0961">Cell wall biogenesis/degradation</keyword>
<keyword id="KW-0328">Glycosyltransferase</keyword>
<keyword id="KW-0472">Membrane</keyword>
<keyword id="KW-0573">Peptidoglycan synthesis</keyword>
<keyword id="KW-1185">Reference proteome</keyword>
<keyword id="KW-0808">Transferase</keyword>
<sequence>MKKIIMTGGGTAGHVTPNLALVPELKKLGYEIKYIGSIEGIERKIIEKEGIEYFPISSGKLRRYFDLKNFSDPFKVLKGVFQAKKIIKREKPDIVFSKGGFVTVPVVIAAHLNKIPVIAHESDITPGLANKLATPYCTRVCVTFPESVKHIKGDKAVLTGTPIRRELLEGNKLEGIKLCGFKDNKPILLIIGGSLGSKIINEIVRKNLDNILSKFNIIHICGKSNLDENLENRKGYAQFEYVNEELPDLMKASDLVISRAGANVIYELLALKKPNLLIPLSKKSSRGDQILNAASFEKSGYSLVLKEEELEDKTLIKKLNYLYENRNVYINNMSKSKMDNGVKNITELIKKYTK</sequence>
<proteinExistence type="inferred from homology"/>
<evidence type="ECO:0000255" key="1">
    <source>
        <dbReference type="HAMAP-Rule" id="MF_00033"/>
    </source>
</evidence>
<dbReference type="EC" id="2.4.1.227" evidence="1"/>
<dbReference type="EMBL" id="CP000727">
    <property type="protein sequence ID" value="ABS36320.1"/>
    <property type="molecule type" value="Genomic_DNA"/>
</dbReference>
<dbReference type="EMBL" id="AM412317">
    <property type="protein sequence ID" value="CAL84322.1"/>
    <property type="molecule type" value="Genomic_DNA"/>
</dbReference>
<dbReference type="RefSeq" id="WP_011987044.1">
    <property type="nucleotide sequence ID" value="NC_009698.1"/>
</dbReference>
<dbReference type="RefSeq" id="YP_001255260.1">
    <property type="nucleotide sequence ID" value="NC_009495.1"/>
</dbReference>
<dbReference type="RefSeq" id="YP_001388473.1">
    <property type="nucleotide sequence ID" value="NC_009698.1"/>
</dbReference>
<dbReference type="SMR" id="A5I5J5"/>
<dbReference type="CAZy" id="GT28">
    <property type="family name" value="Glycosyltransferase Family 28"/>
</dbReference>
<dbReference type="GeneID" id="5185769"/>
<dbReference type="KEGG" id="cbh:CLC_2635"/>
<dbReference type="KEGG" id="cbo:CBO2761"/>
<dbReference type="PATRIC" id="fig|413999.7.peg.2744"/>
<dbReference type="HOGENOM" id="CLU_037404_0_0_9"/>
<dbReference type="UniPathway" id="UPA00219"/>
<dbReference type="PRO" id="PR:A5I5J5"/>
<dbReference type="Proteomes" id="UP000001986">
    <property type="component" value="Chromosome"/>
</dbReference>
<dbReference type="GO" id="GO:0005886">
    <property type="term" value="C:plasma membrane"/>
    <property type="evidence" value="ECO:0007669"/>
    <property type="project" value="UniProtKB-SubCell"/>
</dbReference>
<dbReference type="GO" id="GO:0016757">
    <property type="term" value="F:glycosyltransferase activity"/>
    <property type="evidence" value="ECO:0000318"/>
    <property type="project" value="GO_Central"/>
</dbReference>
<dbReference type="GO" id="GO:0051991">
    <property type="term" value="F:UDP-N-acetyl-D-glucosamine:N-acetylmuramoyl-L-alanyl-D-glutamyl-meso-2,6-diaminopimelyl-D-alanyl-D-alanine-diphosphoundecaprenol 4-beta-N-acetylglucosaminlytransferase activity"/>
    <property type="evidence" value="ECO:0007669"/>
    <property type="project" value="RHEA"/>
</dbReference>
<dbReference type="GO" id="GO:0050511">
    <property type="term" value="F:undecaprenyldiphospho-muramoylpentapeptide beta-N-acetylglucosaminyltransferase activity"/>
    <property type="evidence" value="ECO:0007669"/>
    <property type="project" value="UniProtKB-UniRule"/>
</dbReference>
<dbReference type="GO" id="GO:0005975">
    <property type="term" value="P:carbohydrate metabolic process"/>
    <property type="evidence" value="ECO:0007669"/>
    <property type="project" value="InterPro"/>
</dbReference>
<dbReference type="GO" id="GO:0051301">
    <property type="term" value="P:cell division"/>
    <property type="evidence" value="ECO:0007669"/>
    <property type="project" value="UniProtKB-KW"/>
</dbReference>
<dbReference type="GO" id="GO:0071555">
    <property type="term" value="P:cell wall organization"/>
    <property type="evidence" value="ECO:0007669"/>
    <property type="project" value="UniProtKB-KW"/>
</dbReference>
<dbReference type="GO" id="GO:0030259">
    <property type="term" value="P:lipid glycosylation"/>
    <property type="evidence" value="ECO:0007669"/>
    <property type="project" value="UniProtKB-UniRule"/>
</dbReference>
<dbReference type="GO" id="GO:0009252">
    <property type="term" value="P:peptidoglycan biosynthetic process"/>
    <property type="evidence" value="ECO:0007669"/>
    <property type="project" value="UniProtKB-UniRule"/>
</dbReference>
<dbReference type="GO" id="GO:0008360">
    <property type="term" value="P:regulation of cell shape"/>
    <property type="evidence" value="ECO:0007669"/>
    <property type="project" value="UniProtKB-KW"/>
</dbReference>
<dbReference type="CDD" id="cd03785">
    <property type="entry name" value="GT28_MurG"/>
    <property type="match status" value="1"/>
</dbReference>
<dbReference type="Gene3D" id="3.40.50.2000">
    <property type="entry name" value="Glycogen Phosphorylase B"/>
    <property type="match status" value="2"/>
</dbReference>
<dbReference type="HAMAP" id="MF_00033">
    <property type="entry name" value="MurG"/>
    <property type="match status" value="1"/>
</dbReference>
<dbReference type="InterPro" id="IPR006009">
    <property type="entry name" value="GlcNAc_MurG"/>
</dbReference>
<dbReference type="InterPro" id="IPR007235">
    <property type="entry name" value="Glyco_trans_28_C"/>
</dbReference>
<dbReference type="InterPro" id="IPR004276">
    <property type="entry name" value="GlycoTrans_28_N"/>
</dbReference>
<dbReference type="NCBIfam" id="TIGR01133">
    <property type="entry name" value="murG"/>
    <property type="match status" value="1"/>
</dbReference>
<dbReference type="NCBIfam" id="NF009102">
    <property type="entry name" value="PRK12446.1"/>
    <property type="match status" value="1"/>
</dbReference>
<dbReference type="PANTHER" id="PTHR21015:SF27">
    <property type="entry name" value="UDP-N-ACETYLGLUCOSAMINE--N-ACETYLMURAMYL-(PENTAPEPTIDE) PYROPHOSPHORYL-UNDECAPRENOL N-ACETYLGLUCOSAMINE TRANSFERASE"/>
    <property type="match status" value="1"/>
</dbReference>
<dbReference type="PANTHER" id="PTHR21015">
    <property type="entry name" value="UDP-N-ACETYLGLUCOSAMINE--N-ACETYLMURAMYL-(PENTAPEPTIDE) PYROPHOSPHORYL-UNDECAPRENOL N-ACETYLGLUCOSAMINE TRANSFERASE 1"/>
    <property type="match status" value="1"/>
</dbReference>
<dbReference type="Pfam" id="PF04101">
    <property type="entry name" value="Glyco_tran_28_C"/>
    <property type="match status" value="1"/>
</dbReference>
<dbReference type="Pfam" id="PF03033">
    <property type="entry name" value="Glyco_transf_28"/>
    <property type="match status" value="1"/>
</dbReference>
<dbReference type="SUPFAM" id="SSF53756">
    <property type="entry name" value="UDP-Glycosyltransferase/glycogen phosphorylase"/>
    <property type="match status" value="1"/>
</dbReference>
<reference key="1">
    <citation type="journal article" date="2007" name="Genome Res.">
        <title>Genome sequence of a proteolytic (Group I) Clostridium botulinum strain Hall A and comparative analysis of the clostridial genomes.</title>
        <authorList>
            <person name="Sebaihia M."/>
            <person name="Peck M.W."/>
            <person name="Minton N.P."/>
            <person name="Thomson N.R."/>
            <person name="Holden M.T.G."/>
            <person name="Mitchell W.J."/>
            <person name="Carter A.T."/>
            <person name="Bentley S.D."/>
            <person name="Mason D.R."/>
            <person name="Crossman L."/>
            <person name="Paul C.J."/>
            <person name="Ivens A."/>
            <person name="Wells-Bennik M.H.J."/>
            <person name="Davis I.J."/>
            <person name="Cerdeno-Tarraga A.M."/>
            <person name="Churcher C."/>
            <person name="Quail M.A."/>
            <person name="Chillingworth T."/>
            <person name="Feltwell T."/>
            <person name="Fraser A."/>
            <person name="Goodhead I."/>
            <person name="Hance Z."/>
            <person name="Jagels K."/>
            <person name="Larke N."/>
            <person name="Maddison M."/>
            <person name="Moule S."/>
            <person name="Mungall K."/>
            <person name="Norbertczak H."/>
            <person name="Rabbinowitsch E."/>
            <person name="Sanders M."/>
            <person name="Simmonds M."/>
            <person name="White B."/>
            <person name="Whithead S."/>
            <person name="Parkhill J."/>
        </authorList>
    </citation>
    <scope>NUCLEOTIDE SEQUENCE [LARGE SCALE GENOMIC DNA]</scope>
    <source>
        <strain>Hall / ATCC 3502 / NCTC 13319 / Type A</strain>
    </source>
</reference>
<reference key="2">
    <citation type="journal article" date="2007" name="PLoS ONE">
        <title>Analysis of the neurotoxin complex genes in Clostridium botulinum A1-A4 and B1 strains: BoNT/A3, /Ba4 and /B1 clusters are located within plasmids.</title>
        <authorList>
            <person name="Smith T.J."/>
            <person name="Hill K.K."/>
            <person name="Foley B.T."/>
            <person name="Detter J.C."/>
            <person name="Munk A.C."/>
            <person name="Bruce D.C."/>
            <person name="Doggett N.A."/>
            <person name="Smith L.A."/>
            <person name="Marks J.D."/>
            <person name="Xie G."/>
            <person name="Brettin T.S."/>
        </authorList>
    </citation>
    <scope>NUCLEOTIDE SEQUENCE [LARGE SCALE GENOMIC DNA]</scope>
    <source>
        <strain>Hall / ATCC 3502 / NCTC 13319 / Type A</strain>
    </source>
</reference>
<gene>
    <name evidence="1" type="primary">murG</name>
    <name type="ordered locus">CBO2761</name>
    <name type="ordered locus">CLC_2635</name>
</gene>
<comment type="function">
    <text evidence="1">Cell wall formation. Catalyzes the transfer of a GlcNAc subunit on undecaprenyl-pyrophosphoryl-MurNAc-pentapeptide (lipid intermediate I) to form undecaprenyl-pyrophosphoryl-MurNAc-(pentapeptide)GlcNAc (lipid intermediate II).</text>
</comment>
<comment type="catalytic activity">
    <reaction evidence="1">
        <text>di-trans,octa-cis-undecaprenyl diphospho-N-acetyl-alpha-D-muramoyl-L-alanyl-D-glutamyl-meso-2,6-diaminopimeloyl-D-alanyl-D-alanine + UDP-N-acetyl-alpha-D-glucosamine = di-trans,octa-cis-undecaprenyl diphospho-[N-acetyl-alpha-D-glucosaminyl-(1-&gt;4)]-N-acetyl-alpha-D-muramoyl-L-alanyl-D-glutamyl-meso-2,6-diaminopimeloyl-D-alanyl-D-alanine + UDP + H(+)</text>
        <dbReference type="Rhea" id="RHEA:31227"/>
        <dbReference type="ChEBI" id="CHEBI:15378"/>
        <dbReference type="ChEBI" id="CHEBI:57705"/>
        <dbReference type="ChEBI" id="CHEBI:58223"/>
        <dbReference type="ChEBI" id="CHEBI:61387"/>
        <dbReference type="ChEBI" id="CHEBI:61388"/>
        <dbReference type="EC" id="2.4.1.227"/>
    </reaction>
</comment>
<comment type="pathway">
    <text evidence="1">Cell wall biogenesis; peptidoglycan biosynthesis.</text>
</comment>
<comment type="subcellular location">
    <subcellularLocation>
        <location evidence="1">Cell membrane</location>
        <topology evidence="1">Peripheral membrane protein</topology>
        <orientation evidence="1">Cytoplasmic side</orientation>
    </subcellularLocation>
</comment>
<comment type="similarity">
    <text evidence="1">Belongs to the glycosyltransferase 28 family. MurG subfamily.</text>
</comment>
<accession>A5I5J5</accession>
<accession>A7G6Q8</accession>
<organism>
    <name type="scientific">Clostridium botulinum (strain Hall / ATCC 3502 / NCTC 13319 / Type A)</name>
    <dbReference type="NCBI Taxonomy" id="441771"/>
    <lineage>
        <taxon>Bacteria</taxon>
        <taxon>Bacillati</taxon>
        <taxon>Bacillota</taxon>
        <taxon>Clostridia</taxon>
        <taxon>Eubacteriales</taxon>
        <taxon>Clostridiaceae</taxon>
        <taxon>Clostridium</taxon>
    </lineage>
</organism>
<name>MURG_CLOBH</name>